<accession>Q9WZW3</accession>
<sequence>MPEIIYAAAPGASNGTTTTATGGGWGSLLFMLIFFIAIFYFMIILPQRRREKQFQQMISQMKRGDTVVTIGGIVGKVIDIKKDTVKIKTANSTELEITKRAISTVIKERSQENQEG</sequence>
<organism>
    <name type="scientific">Thermotoga maritima (strain ATCC 43589 / DSM 3109 / JCM 10099 / NBRC 100826 / MSB8)</name>
    <dbReference type="NCBI Taxonomy" id="243274"/>
    <lineage>
        <taxon>Bacteria</taxon>
        <taxon>Thermotogati</taxon>
        <taxon>Thermotogota</taxon>
        <taxon>Thermotogae</taxon>
        <taxon>Thermotogales</taxon>
        <taxon>Thermotogaceae</taxon>
        <taxon>Thermotoga</taxon>
    </lineage>
</organism>
<keyword id="KW-0997">Cell inner membrane</keyword>
<keyword id="KW-1003">Cell membrane</keyword>
<keyword id="KW-0472">Membrane</keyword>
<keyword id="KW-0653">Protein transport</keyword>
<keyword id="KW-1185">Reference proteome</keyword>
<keyword id="KW-0811">Translocation</keyword>
<keyword id="KW-0812">Transmembrane</keyword>
<keyword id="KW-1133">Transmembrane helix</keyword>
<keyword id="KW-0813">Transport</keyword>
<name>YAJC_THEMA</name>
<feature type="chain" id="PRO_0000097035" description="Sec translocon accessory complex subunit YajC">
    <location>
        <begin position="1"/>
        <end position="116"/>
    </location>
</feature>
<feature type="transmembrane region" description="Helical" evidence="2">
    <location>
        <begin position="25"/>
        <end position="45"/>
    </location>
</feature>
<dbReference type="EMBL" id="AE000512">
    <property type="protein sequence ID" value="AAD35941.1"/>
    <property type="molecule type" value="Genomic_DNA"/>
</dbReference>
<dbReference type="PIR" id="D72325">
    <property type="entry name" value="D72325"/>
</dbReference>
<dbReference type="RefSeq" id="NP_228668.1">
    <property type="nucleotide sequence ID" value="NC_000853.1"/>
</dbReference>
<dbReference type="RefSeq" id="WP_004080747.1">
    <property type="nucleotide sequence ID" value="NZ_CP011107.1"/>
</dbReference>
<dbReference type="SMR" id="Q9WZW3"/>
<dbReference type="STRING" id="243274.TM_0859"/>
<dbReference type="PaxDb" id="243274-THEMA_00340"/>
<dbReference type="EnsemblBacteria" id="AAD35941">
    <property type="protein sequence ID" value="AAD35941"/>
    <property type="gene ID" value="TM_0859"/>
</dbReference>
<dbReference type="KEGG" id="tma:TM0859"/>
<dbReference type="KEGG" id="tmi:THEMA_00340"/>
<dbReference type="KEGG" id="tmm:Tmari_0861"/>
<dbReference type="KEGG" id="tmw:THMA_0881"/>
<dbReference type="eggNOG" id="COG1862">
    <property type="taxonomic scope" value="Bacteria"/>
</dbReference>
<dbReference type="InParanoid" id="Q9WZW3"/>
<dbReference type="Proteomes" id="UP000008183">
    <property type="component" value="Chromosome"/>
</dbReference>
<dbReference type="GO" id="GO:0005886">
    <property type="term" value="C:plasma membrane"/>
    <property type="evidence" value="ECO:0000318"/>
    <property type="project" value="GO_Central"/>
</dbReference>
<dbReference type="GO" id="GO:0015031">
    <property type="term" value="P:protein transport"/>
    <property type="evidence" value="ECO:0007669"/>
    <property type="project" value="UniProtKB-KW"/>
</dbReference>
<dbReference type="InterPro" id="IPR003849">
    <property type="entry name" value="Preprotein_translocase_YajC"/>
</dbReference>
<dbReference type="NCBIfam" id="TIGR00739">
    <property type="entry name" value="yajC"/>
    <property type="match status" value="1"/>
</dbReference>
<dbReference type="PANTHER" id="PTHR33909">
    <property type="entry name" value="SEC TRANSLOCON ACCESSORY COMPLEX SUBUNIT YAJC"/>
    <property type="match status" value="1"/>
</dbReference>
<dbReference type="PANTHER" id="PTHR33909:SF1">
    <property type="entry name" value="SEC TRANSLOCON ACCESSORY COMPLEX SUBUNIT YAJC"/>
    <property type="match status" value="1"/>
</dbReference>
<dbReference type="Pfam" id="PF02699">
    <property type="entry name" value="YajC"/>
    <property type="match status" value="1"/>
</dbReference>
<dbReference type="PRINTS" id="PR01853">
    <property type="entry name" value="YAJCTRNLCASE"/>
</dbReference>
<dbReference type="SMART" id="SM01323">
    <property type="entry name" value="YajC"/>
    <property type="match status" value="1"/>
</dbReference>
<protein>
    <recommendedName>
        <fullName>Sec translocon accessory complex subunit YajC</fullName>
    </recommendedName>
</protein>
<gene>
    <name type="primary">yajC</name>
    <name type="ordered locus">TM_0859</name>
</gene>
<reference key="1">
    <citation type="journal article" date="1999" name="Nature">
        <title>Evidence for lateral gene transfer between Archaea and Bacteria from genome sequence of Thermotoga maritima.</title>
        <authorList>
            <person name="Nelson K.E."/>
            <person name="Clayton R.A."/>
            <person name="Gill S.R."/>
            <person name="Gwinn M.L."/>
            <person name="Dodson R.J."/>
            <person name="Haft D.H."/>
            <person name="Hickey E.K."/>
            <person name="Peterson J.D."/>
            <person name="Nelson W.C."/>
            <person name="Ketchum K.A."/>
            <person name="McDonald L.A."/>
            <person name="Utterback T.R."/>
            <person name="Malek J.A."/>
            <person name="Linher K.D."/>
            <person name="Garrett M.M."/>
            <person name="Stewart A.M."/>
            <person name="Cotton M.D."/>
            <person name="Pratt M.S."/>
            <person name="Phillips C.A."/>
            <person name="Richardson D.L."/>
            <person name="Heidelberg J.F."/>
            <person name="Sutton G.G."/>
            <person name="Fleischmann R.D."/>
            <person name="Eisen J.A."/>
            <person name="White O."/>
            <person name="Salzberg S.L."/>
            <person name="Smith H.O."/>
            <person name="Venter J.C."/>
            <person name="Fraser C.M."/>
        </authorList>
    </citation>
    <scope>NUCLEOTIDE SEQUENCE [LARGE SCALE GENOMIC DNA]</scope>
    <source>
        <strain>ATCC 43589 / DSM 3109 / JCM 10099 / NBRC 100826 / MSB8</strain>
    </source>
</reference>
<proteinExistence type="inferred from homology"/>
<comment type="function">
    <text evidence="1">The SecYEG-SecDF-YajC-YidC holo-translocon (HTL) protein secretase/insertase is a supercomplex required for protein secretion, insertion of proteins into membranes, and assembly of membrane protein complexes. While the SecYEG complex is essential for assembly of a number of proteins and complexes, the SecDF-YajC-YidC subcomplex facilitates these functions.</text>
</comment>
<comment type="subunit">
    <text evidence="1">Part of the SecDF-YidC-YajC translocase complex. The SecDF-YidC-YajC translocase forms a supercomplex with SecYEG, called the holo-translocon (HTL).</text>
</comment>
<comment type="subcellular location">
    <subcellularLocation>
        <location evidence="1">Cell inner membrane</location>
        <topology evidence="1">Single-pass membrane protein</topology>
    </subcellularLocation>
</comment>
<comment type="similarity">
    <text evidence="3">Belongs to the YajC family.</text>
</comment>
<evidence type="ECO:0000250" key="1">
    <source>
        <dbReference type="UniProtKB" id="P0ADZ7"/>
    </source>
</evidence>
<evidence type="ECO:0000255" key="2"/>
<evidence type="ECO:0000305" key="3"/>